<accession>A3PF20</accession>
<feature type="chain" id="PRO_1000126687" description="Large ribosomal subunit protein bL31">
    <location>
        <begin position="1"/>
        <end position="86"/>
    </location>
</feature>
<feature type="region of interest" description="Disordered" evidence="2">
    <location>
        <begin position="64"/>
        <end position="86"/>
    </location>
</feature>
<feature type="compositionally biased region" description="Basic and acidic residues" evidence="2">
    <location>
        <begin position="74"/>
        <end position="86"/>
    </location>
</feature>
<protein>
    <recommendedName>
        <fullName evidence="1">Large ribosomal subunit protein bL31</fullName>
    </recommendedName>
    <alternativeName>
        <fullName evidence="3">50S ribosomal protein L31</fullName>
    </alternativeName>
</protein>
<evidence type="ECO:0000255" key="1">
    <source>
        <dbReference type="HAMAP-Rule" id="MF_00501"/>
    </source>
</evidence>
<evidence type="ECO:0000256" key="2">
    <source>
        <dbReference type="SAM" id="MobiDB-lite"/>
    </source>
</evidence>
<evidence type="ECO:0000305" key="3"/>
<gene>
    <name evidence="1" type="primary">rpmE</name>
    <name evidence="1" type="synonym">rpl31</name>
    <name type="ordered locus">P9301_17221</name>
</gene>
<organism>
    <name type="scientific">Prochlorococcus marinus (strain MIT 9301)</name>
    <dbReference type="NCBI Taxonomy" id="167546"/>
    <lineage>
        <taxon>Bacteria</taxon>
        <taxon>Bacillati</taxon>
        <taxon>Cyanobacteriota</taxon>
        <taxon>Cyanophyceae</taxon>
        <taxon>Synechococcales</taxon>
        <taxon>Prochlorococcaceae</taxon>
        <taxon>Prochlorococcus</taxon>
    </lineage>
</organism>
<comment type="function">
    <text evidence="1">Binds the 23S rRNA.</text>
</comment>
<comment type="subunit">
    <text evidence="1">Part of the 50S ribosomal subunit.</text>
</comment>
<comment type="similarity">
    <text evidence="1">Belongs to the bacterial ribosomal protein bL31 family. Type A subfamily.</text>
</comment>
<reference key="1">
    <citation type="journal article" date="2007" name="PLoS Genet.">
        <title>Patterns and implications of gene gain and loss in the evolution of Prochlorococcus.</title>
        <authorList>
            <person name="Kettler G.C."/>
            <person name="Martiny A.C."/>
            <person name="Huang K."/>
            <person name="Zucker J."/>
            <person name="Coleman M.L."/>
            <person name="Rodrigue S."/>
            <person name="Chen F."/>
            <person name="Lapidus A."/>
            <person name="Ferriera S."/>
            <person name="Johnson J."/>
            <person name="Steglich C."/>
            <person name="Church G.M."/>
            <person name="Richardson P."/>
            <person name="Chisholm S.W."/>
        </authorList>
    </citation>
    <scope>NUCLEOTIDE SEQUENCE [LARGE SCALE GENOMIC DNA]</scope>
    <source>
        <strain>MIT 9301</strain>
    </source>
</reference>
<keyword id="KW-1185">Reference proteome</keyword>
<keyword id="KW-0687">Ribonucleoprotein</keyword>
<keyword id="KW-0689">Ribosomal protein</keyword>
<keyword id="KW-0694">RNA-binding</keyword>
<keyword id="KW-0699">rRNA-binding</keyword>
<sequence length="86" mass="9732">MPKSEIHPKWYPDAKVICNGEVVMTTGSTQPELHVDVWSGNHPFFTGTQKILDTEGRVDRFMKKYGMGSANSSESKDQKEEKDSKK</sequence>
<name>RL31_PROM0</name>
<proteinExistence type="inferred from homology"/>
<dbReference type="EMBL" id="CP000576">
    <property type="protein sequence ID" value="ABO18345.1"/>
    <property type="molecule type" value="Genomic_DNA"/>
</dbReference>
<dbReference type="RefSeq" id="WP_011863638.1">
    <property type="nucleotide sequence ID" value="NC_009091.1"/>
</dbReference>
<dbReference type="STRING" id="167546.P9301_17221"/>
<dbReference type="KEGG" id="pmg:P9301_17221"/>
<dbReference type="eggNOG" id="COG0254">
    <property type="taxonomic scope" value="Bacteria"/>
</dbReference>
<dbReference type="HOGENOM" id="CLU_114306_1_2_3"/>
<dbReference type="OrthoDB" id="9803251at2"/>
<dbReference type="Proteomes" id="UP000001430">
    <property type="component" value="Chromosome"/>
</dbReference>
<dbReference type="GO" id="GO:1990904">
    <property type="term" value="C:ribonucleoprotein complex"/>
    <property type="evidence" value="ECO:0007669"/>
    <property type="project" value="UniProtKB-KW"/>
</dbReference>
<dbReference type="GO" id="GO:0005840">
    <property type="term" value="C:ribosome"/>
    <property type="evidence" value="ECO:0007669"/>
    <property type="project" value="UniProtKB-KW"/>
</dbReference>
<dbReference type="GO" id="GO:0019843">
    <property type="term" value="F:rRNA binding"/>
    <property type="evidence" value="ECO:0007669"/>
    <property type="project" value="UniProtKB-KW"/>
</dbReference>
<dbReference type="GO" id="GO:0003735">
    <property type="term" value="F:structural constituent of ribosome"/>
    <property type="evidence" value="ECO:0007669"/>
    <property type="project" value="InterPro"/>
</dbReference>
<dbReference type="GO" id="GO:0006412">
    <property type="term" value="P:translation"/>
    <property type="evidence" value="ECO:0007669"/>
    <property type="project" value="UniProtKB-UniRule"/>
</dbReference>
<dbReference type="Gene3D" id="4.10.830.30">
    <property type="entry name" value="Ribosomal protein L31"/>
    <property type="match status" value="1"/>
</dbReference>
<dbReference type="HAMAP" id="MF_00501">
    <property type="entry name" value="Ribosomal_bL31_1"/>
    <property type="match status" value="1"/>
</dbReference>
<dbReference type="InterPro" id="IPR034704">
    <property type="entry name" value="Ribosomal_bL28/bL31-like_sf"/>
</dbReference>
<dbReference type="InterPro" id="IPR002150">
    <property type="entry name" value="Ribosomal_bL31"/>
</dbReference>
<dbReference type="InterPro" id="IPR027491">
    <property type="entry name" value="Ribosomal_bL31_A"/>
</dbReference>
<dbReference type="InterPro" id="IPR042105">
    <property type="entry name" value="Ribosomal_bL31_sf"/>
</dbReference>
<dbReference type="NCBIfam" id="TIGR00105">
    <property type="entry name" value="L31"/>
    <property type="match status" value="1"/>
</dbReference>
<dbReference type="NCBIfam" id="NF000612">
    <property type="entry name" value="PRK00019.1"/>
    <property type="match status" value="1"/>
</dbReference>
<dbReference type="NCBIfam" id="NF001809">
    <property type="entry name" value="PRK00528.1"/>
    <property type="match status" value="1"/>
</dbReference>
<dbReference type="PANTHER" id="PTHR33280">
    <property type="entry name" value="50S RIBOSOMAL PROTEIN L31, CHLOROPLASTIC"/>
    <property type="match status" value="1"/>
</dbReference>
<dbReference type="PANTHER" id="PTHR33280:SF1">
    <property type="entry name" value="LARGE RIBOSOMAL SUBUNIT PROTEIN BL31C"/>
    <property type="match status" value="1"/>
</dbReference>
<dbReference type="Pfam" id="PF01197">
    <property type="entry name" value="Ribosomal_L31"/>
    <property type="match status" value="1"/>
</dbReference>
<dbReference type="PRINTS" id="PR01249">
    <property type="entry name" value="RIBOSOMALL31"/>
</dbReference>
<dbReference type="SUPFAM" id="SSF143800">
    <property type="entry name" value="L28p-like"/>
    <property type="match status" value="1"/>
</dbReference>
<dbReference type="PROSITE" id="PS01143">
    <property type="entry name" value="RIBOSOMAL_L31"/>
    <property type="match status" value="1"/>
</dbReference>